<sequence length="271" mass="28883">MHAASREALAKVSSDLDAALAADNTMAVAAQAGTELFDVVDILDGDRALRVAVADSSKDAHSRVGLIEAVFGGKVSPSVLEVLKDAAEQTWSTPREFRAGLVQLGRRALLRSAEKQGQLGQVEDELFRLSRILDRESKLTQLLSDRTQEIGGRRDLLAKVLYGKVTAVTEALALQAIGRPEHNPIDDIAALAGAVAELQGRSVAHVVTAVELNEGQQQALAEKLGRIYGRAMSIHSEVDTSLLGGMIIRVGDEVIDGSTSGKLERLRASFA</sequence>
<proteinExistence type="inferred from homology"/>
<name>ATPD_CORGL</name>
<organism>
    <name type="scientific">Corynebacterium glutamicum (strain ATCC 13032 / DSM 20300 / JCM 1318 / BCRC 11384 / CCUG 27702 / LMG 3730 / NBRC 12168 / NCIMB 10025 / NRRL B-2784 / 534)</name>
    <dbReference type="NCBI Taxonomy" id="196627"/>
    <lineage>
        <taxon>Bacteria</taxon>
        <taxon>Bacillati</taxon>
        <taxon>Actinomycetota</taxon>
        <taxon>Actinomycetes</taxon>
        <taxon>Mycobacteriales</taxon>
        <taxon>Corynebacteriaceae</taxon>
        <taxon>Corynebacterium</taxon>
    </lineage>
</organism>
<protein>
    <recommendedName>
        <fullName evidence="1">ATP synthase subunit delta</fullName>
    </recommendedName>
    <alternativeName>
        <fullName evidence="1">ATP synthase F(1) sector subunit delta</fullName>
    </alternativeName>
    <alternativeName>
        <fullName evidence="1">F-type ATPase subunit delta</fullName>
        <shortName evidence="1">F-ATPase subunit delta</shortName>
    </alternativeName>
</protein>
<evidence type="ECO:0000255" key="1">
    <source>
        <dbReference type="HAMAP-Rule" id="MF_01416"/>
    </source>
</evidence>
<comment type="function">
    <text evidence="1">F(1)F(0) ATP synthase produces ATP from ADP in the presence of a proton or sodium gradient. F-type ATPases consist of two structural domains, F(1) containing the extramembraneous catalytic core and F(0) containing the membrane proton channel, linked together by a central stalk and a peripheral stalk. During catalysis, ATP synthesis in the catalytic domain of F(1) is coupled via a rotary mechanism of the central stalk subunits to proton translocation.</text>
</comment>
<comment type="function">
    <text evidence="1">This protein is part of the stalk that links CF(0) to CF(1). It either transmits conformational changes from CF(0) to CF(1) or is implicated in proton conduction.</text>
</comment>
<comment type="subunit">
    <text evidence="1">F-type ATPases have 2 components, F(1) - the catalytic core - and F(0) - the membrane proton channel. F(1) has five subunits: alpha(3), beta(3), gamma(1), delta(1), epsilon(1). F(0) has three main subunits: a(1), b(2) and c(10-14). The alpha and beta chains form an alternating ring which encloses part of the gamma chain. F(1) is attached to F(0) by a central stalk formed by the gamma and epsilon chains, while a peripheral stalk is formed by the delta and b chains.</text>
</comment>
<comment type="subcellular location">
    <subcellularLocation>
        <location evidence="1">Cell membrane</location>
        <topology evidence="1">Peripheral membrane protein</topology>
    </subcellularLocation>
</comment>
<comment type="similarity">
    <text evidence="1">Belongs to the ATPase delta chain family.</text>
</comment>
<feature type="chain" id="PRO_0000382089" description="ATP synthase subunit delta">
    <location>
        <begin position="1"/>
        <end position="271"/>
    </location>
</feature>
<keyword id="KW-0066">ATP synthesis</keyword>
<keyword id="KW-1003">Cell membrane</keyword>
<keyword id="KW-0139">CF(1)</keyword>
<keyword id="KW-0375">Hydrogen ion transport</keyword>
<keyword id="KW-0406">Ion transport</keyword>
<keyword id="KW-0472">Membrane</keyword>
<keyword id="KW-1185">Reference proteome</keyword>
<keyword id="KW-0813">Transport</keyword>
<dbReference type="EMBL" id="AB046112">
    <property type="protein sequence ID" value="BAB08154.1"/>
    <property type="molecule type" value="Genomic_DNA"/>
</dbReference>
<dbReference type="EMBL" id="BA000036">
    <property type="protein sequence ID" value="BAB98602.1"/>
    <property type="molecule type" value="Genomic_DNA"/>
</dbReference>
<dbReference type="EMBL" id="BX927151">
    <property type="protein sequence ID" value="CAF19913.1"/>
    <property type="molecule type" value="Genomic_DNA"/>
</dbReference>
<dbReference type="RefSeq" id="NP_600434.1">
    <property type="nucleotide sequence ID" value="NC_003450.3"/>
</dbReference>
<dbReference type="RefSeq" id="WP_003854845.1">
    <property type="nucleotide sequence ID" value="NC_006958.1"/>
</dbReference>
<dbReference type="SMR" id="Q7DIC8"/>
<dbReference type="STRING" id="196627.cg1365"/>
<dbReference type="KEGG" id="cgb:cg1365"/>
<dbReference type="KEGG" id="cgl:Cgl1209"/>
<dbReference type="PATRIC" id="fig|196627.13.peg.1188"/>
<dbReference type="eggNOG" id="COG0712">
    <property type="taxonomic scope" value="Bacteria"/>
</dbReference>
<dbReference type="HOGENOM" id="CLU_088880_0_0_11"/>
<dbReference type="OrthoDB" id="5242917at2"/>
<dbReference type="BioCyc" id="CORYNE:G18NG-10782-MONOMER"/>
<dbReference type="Proteomes" id="UP000000582">
    <property type="component" value="Chromosome"/>
</dbReference>
<dbReference type="Proteomes" id="UP000001009">
    <property type="component" value="Chromosome"/>
</dbReference>
<dbReference type="GO" id="GO:0005886">
    <property type="term" value="C:plasma membrane"/>
    <property type="evidence" value="ECO:0007669"/>
    <property type="project" value="UniProtKB-SubCell"/>
</dbReference>
<dbReference type="GO" id="GO:0045259">
    <property type="term" value="C:proton-transporting ATP synthase complex"/>
    <property type="evidence" value="ECO:0007669"/>
    <property type="project" value="UniProtKB-KW"/>
</dbReference>
<dbReference type="GO" id="GO:0046933">
    <property type="term" value="F:proton-transporting ATP synthase activity, rotational mechanism"/>
    <property type="evidence" value="ECO:0007669"/>
    <property type="project" value="UniProtKB-UniRule"/>
</dbReference>
<dbReference type="HAMAP" id="MF_01416">
    <property type="entry name" value="ATP_synth_delta_bact"/>
    <property type="match status" value="1"/>
</dbReference>
<dbReference type="InterPro" id="IPR020781">
    <property type="entry name" value="ATPase_OSCP/d_CS"/>
</dbReference>
<dbReference type="InterPro" id="IPR000711">
    <property type="entry name" value="ATPase_OSCP/dsu"/>
</dbReference>
<dbReference type="NCBIfam" id="TIGR01145">
    <property type="entry name" value="ATP_synt_delta"/>
    <property type="match status" value="1"/>
</dbReference>
<dbReference type="NCBIfam" id="NF009967">
    <property type="entry name" value="PRK13430.1"/>
    <property type="match status" value="1"/>
</dbReference>
<dbReference type="PANTHER" id="PTHR11910">
    <property type="entry name" value="ATP SYNTHASE DELTA CHAIN"/>
    <property type="match status" value="1"/>
</dbReference>
<dbReference type="Pfam" id="PF00213">
    <property type="entry name" value="OSCP"/>
    <property type="match status" value="1"/>
</dbReference>
<dbReference type="PRINTS" id="PR00125">
    <property type="entry name" value="ATPASEDELTA"/>
</dbReference>
<dbReference type="PROSITE" id="PS00389">
    <property type="entry name" value="ATPASE_DELTA"/>
    <property type="match status" value="1"/>
</dbReference>
<gene>
    <name evidence="1" type="primary">atpH</name>
    <name type="ordered locus">Cgl1209</name>
    <name type="ordered locus">cg1365</name>
</gene>
<accession>Q7DIC8</accession>
<accession>Q6M5X0</accession>
<accession>Q79VG8</accession>
<reference key="1">
    <citation type="submission" date="2000-07" db="EMBL/GenBank/DDBJ databases">
        <title>Nucleotide sequence of atp operon of Corynebacterium glutamicum.</title>
        <authorList>
            <person name="Sekine H."/>
            <person name="Yokota A."/>
            <person name="Tomita F."/>
        </authorList>
    </citation>
    <scope>NUCLEOTIDE SEQUENCE [GENOMIC DNA]</scope>
    <source>
        <strain>ATCC 13060 / LMG 3653 / NCIB 10333 / 614</strain>
    </source>
</reference>
<reference key="2">
    <citation type="journal article" date="2003" name="J. Biotechnol.">
        <title>The complete Corynebacterium glutamicum ATCC 13032 genome sequence and its impact on the production of L-aspartate-derived amino acids and vitamins.</title>
        <authorList>
            <person name="Kalinowski J."/>
            <person name="Bathe B."/>
            <person name="Bartels D."/>
            <person name="Bischoff N."/>
            <person name="Bott M."/>
            <person name="Burkovski A."/>
            <person name="Dusch N."/>
            <person name="Eggeling L."/>
            <person name="Eikmanns B.J."/>
            <person name="Gaigalat L."/>
            <person name="Goesmann A."/>
            <person name="Hartmann M."/>
            <person name="Huthmacher K."/>
            <person name="Kraemer R."/>
            <person name="Linke B."/>
            <person name="McHardy A.C."/>
            <person name="Meyer F."/>
            <person name="Moeckel B."/>
            <person name="Pfefferle W."/>
            <person name="Puehler A."/>
            <person name="Rey D.A."/>
            <person name="Rueckert C."/>
            <person name="Rupp O."/>
            <person name="Sahm H."/>
            <person name="Wendisch V.F."/>
            <person name="Wiegraebe I."/>
            <person name="Tauch A."/>
        </authorList>
    </citation>
    <scope>NUCLEOTIDE SEQUENCE [LARGE SCALE GENOMIC DNA]</scope>
    <source>
        <strain>ATCC 13032 / DSM 20300 / JCM 1318 / BCRC 11384 / CCUG 27702 / LMG 3730 / NBRC 12168 / NCIMB 10025 / NRRL B-2784 / 534</strain>
    </source>
</reference>
<reference key="3">
    <citation type="journal article" date="2003" name="Appl. Microbiol. Biotechnol.">
        <title>The Corynebacterium glutamicum genome: features and impacts on biotechnological processes.</title>
        <authorList>
            <person name="Ikeda M."/>
            <person name="Nakagawa S."/>
        </authorList>
    </citation>
    <scope>NUCLEOTIDE SEQUENCE [LARGE SCALE GENOMIC DNA]</scope>
    <source>
        <strain>ATCC 13032 / DSM 20300 / JCM 1318 / BCRC 11384 / CCUG 27702 / LMG 3730 / NBRC 12168 / NCIMB 10025 / NRRL B-2784 / 534</strain>
    </source>
</reference>